<proteinExistence type="evidence at transcript level"/>
<keyword id="KW-0138">CF(0)</keyword>
<keyword id="KW-0375">Hydrogen ion transport</keyword>
<keyword id="KW-0406">Ion transport</keyword>
<keyword id="KW-0472">Membrane</keyword>
<keyword id="KW-0496">Mitochondrion</keyword>
<keyword id="KW-0999">Mitochondrion inner membrane</keyword>
<keyword id="KW-1185">Reference proteome</keyword>
<keyword id="KW-0809">Transit peptide</keyword>
<keyword id="KW-0813">Transport</keyword>
<sequence length="305" mass="34937">MSLSRCLPLGQNARVIIIPARLAHAASTQAAAATDDAPNFFQKLAHRFQGVPLKGEAHAPKSMFEDCNKEWSAPEPLPAIPKDFKEHPDRDLVNYPYPARPMYPPKSRLLMMPDSWFTPFQKVTGVSGPYLFFGGLFAFLVNKELWVFEEQGHMTVGWILFYLLVTRTAGYKIDQGLYNGYQERVNFFKGLIQEDLKEAVEFKKTSAKQTESLNSIKESYPTALKESMALQLEATYRKNVQSVATELKRRIDYLKETEESKARVEREQLLKLINSEVDKEFSDRSFKDKYLQNAIQQLKGLNVQL</sequence>
<reference evidence="5" key="1">
    <citation type="journal article" date="1998" name="Science">
        <title>Genome sequence of the nematode C. elegans: a platform for investigating biology.</title>
        <authorList>
            <consortium name="The C. elegans sequencing consortium"/>
        </authorList>
    </citation>
    <scope>NUCLEOTIDE SEQUENCE [LARGE SCALE GENOMIC DNA]</scope>
    <source>
        <strain evidence="5">Bristol N2</strain>
    </source>
</reference>
<reference evidence="4" key="2">
    <citation type="journal article" date="2007" name="Mech. Dev.">
        <title>ASB-1, a germline-specific isoform of mitochondrial ATP synthase b subunit, is required to maintain the rate of germline development in Caenorhabditis elegans.</title>
        <authorList>
            <person name="Kawasaki I."/>
            <person name="Hanazawa M."/>
            <person name="Gengyo-Ando K."/>
            <person name="Mitani S."/>
            <person name="Maruyama I."/>
            <person name="Iino Y."/>
        </authorList>
    </citation>
    <scope>FUNCTION</scope>
    <scope>DEVELOPMENTAL STAGE</scope>
    <scope>DISRUPTION PHENOTYPE</scope>
</reference>
<organism evidence="5">
    <name type="scientific">Caenorhabditis elegans</name>
    <dbReference type="NCBI Taxonomy" id="6239"/>
    <lineage>
        <taxon>Eukaryota</taxon>
        <taxon>Metazoa</taxon>
        <taxon>Ecdysozoa</taxon>
        <taxon>Nematoda</taxon>
        <taxon>Chromadorea</taxon>
        <taxon>Rhabditida</taxon>
        <taxon>Rhabditina</taxon>
        <taxon>Rhabditomorpha</taxon>
        <taxon>Rhabditoidea</taxon>
        <taxon>Rhabditidae</taxon>
        <taxon>Peloderinae</taxon>
        <taxon>Caenorhabditis</taxon>
    </lineage>
</organism>
<comment type="function">
    <text evidence="3 4">Mitochondrial membrane ATP synthase (F(1)F(0) ATP synthase or Complex V) produces ATP from ADP in the presence of a proton gradient across the membrane which is generated by electron transport complexes of the respiratory chain. F-type ATPases consist of two structural domains, F(1) - containing the extramembraneous catalytic core, and F(0) - containing the membrane proton channel, linked together by a central stalk and a peripheral stalk. During catalysis, ATP synthesis in the catalytic domain of F(1) is coupled via a rotary mechanism of the central stalk subunits to proton translocation. Part of the complex F(0) domain and the peripheric stalk, which acts as a stator to hold the subunits of the catalytic subcomplexes relative to the rotary elements (Probable). Plays a role in somatic development (PubMed:17223323). Does not play a role in germline development (PubMed:17223323).</text>
</comment>
<comment type="subunit">
    <text evidence="4">Subunit of the F-type ATPase which has 2 components, CF(1) - the catalytic core - and CF(0) - the membrane proton channel.</text>
</comment>
<comment type="subcellular location">
    <subcellularLocation>
        <location evidence="2">Mitochondrion</location>
    </subcellularLocation>
    <subcellularLocation>
        <location evidence="2">Mitochondrion inner membrane</location>
    </subcellularLocation>
</comment>
<comment type="developmental stage">
    <text evidence="3">Expressed in somatic tissues throughout the larval stages and in adults.</text>
</comment>
<comment type="disruption phenotype">
    <text evidence="3">RNAi-mediated knockdown results in either embryonic lethality or arrest at the L2 to L3 larval stages (PubMed:17223323). RNAi-mediated knockdown results in a delay in somatic development (PubMed:17223323). RNAi-mediated knockdown does not cause sterility (PubMed:17223323).</text>
</comment>
<comment type="similarity">
    <text evidence="2">Belongs to the eukaryotic ATPase B chain family.</text>
</comment>
<dbReference type="EMBL" id="BX284606">
    <property type="protein sequence ID" value="CCD83382.1"/>
    <property type="molecule type" value="Genomic_DNA"/>
</dbReference>
<dbReference type="PIR" id="T15960">
    <property type="entry name" value="T15960"/>
</dbReference>
<dbReference type="RefSeq" id="NP_508770.1">
    <property type="nucleotide sequence ID" value="NM_076369.6"/>
</dbReference>
<dbReference type="SMR" id="Q19126"/>
<dbReference type="DIP" id="DIP-25346N"/>
<dbReference type="FunCoup" id="Q19126">
    <property type="interactions" value="1619"/>
</dbReference>
<dbReference type="IntAct" id="Q19126">
    <property type="interactions" value="2"/>
</dbReference>
<dbReference type="STRING" id="6239.F02E8.1.3"/>
<dbReference type="PaxDb" id="6239-F02E8.1.3"/>
<dbReference type="PeptideAtlas" id="Q19126"/>
<dbReference type="EnsemblMetazoa" id="F02E8.1.1">
    <property type="protein sequence ID" value="F02E8.1.1"/>
    <property type="gene ID" value="WBGene00000207"/>
</dbReference>
<dbReference type="EnsemblMetazoa" id="F02E8.1.2">
    <property type="protein sequence ID" value="F02E8.1.2"/>
    <property type="gene ID" value="WBGene00000207"/>
</dbReference>
<dbReference type="GeneID" id="180718"/>
<dbReference type="KEGG" id="cel:CELE_F02E8.1"/>
<dbReference type="UCSC" id="F02E8.1.2">
    <property type="organism name" value="c. elegans"/>
</dbReference>
<dbReference type="AGR" id="WB:WBGene00000207"/>
<dbReference type="CTD" id="180718"/>
<dbReference type="WormBase" id="F02E8.1">
    <property type="protein sequence ID" value="CE07016"/>
    <property type="gene ID" value="WBGene00000207"/>
    <property type="gene designation" value="asb-2"/>
</dbReference>
<dbReference type="eggNOG" id="KOG3976">
    <property type="taxonomic scope" value="Eukaryota"/>
</dbReference>
<dbReference type="GeneTree" id="ENSGT00390000001958"/>
<dbReference type="HOGENOM" id="CLU_925122_0_0_1"/>
<dbReference type="InParanoid" id="Q19126"/>
<dbReference type="OMA" id="RNDCEPP"/>
<dbReference type="OrthoDB" id="67388at2759"/>
<dbReference type="PhylomeDB" id="Q19126"/>
<dbReference type="PRO" id="PR:Q19126"/>
<dbReference type="Proteomes" id="UP000001940">
    <property type="component" value="Chromosome X"/>
</dbReference>
<dbReference type="Bgee" id="WBGene00000207">
    <property type="expression patterns" value="Expressed in larva and 3 other cell types or tissues"/>
</dbReference>
<dbReference type="GO" id="GO:0005743">
    <property type="term" value="C:mitochondrial inner membrane"/>
    <property type="evidence" value="ECO:0007669"/>
    <property type="project" value="UniProtKB-SubCell"/>
</dbReference>
<dbReference type="GO" id="GO:0045259">
    <property type="term" value="C:proton-transporting ATP synthase complex"/>
    <property type="evidence" value="ECO:0007669"/>
    <property type="project" value="UniProtKB-KW"/>
</dbReference>
<dbReference type="GO" id="GO:0015078">
    <property type="term" value="F:proton transmembrane transporter activity"/>
    <property type="evidence" value="ECO:0007669"/>
    <property type="project" value="InterPro"/>
</dbReference>
<dbReference type="GO" id="GO:0015986">
    <property type="term" value="P:proton motive force-driven ATP synthesis"/>
    <property type="evidence" value="ECO:0000318"/>
    <property type="project" value="GO_Central"/>
</dbReference>
<dbReference type="FunFam" id="1.20.5.2210:FF:000004">
    <property type="entry name" value="ATP Synthase B homolog"/>
    <property type="match status" value="1"/>
</dbReference>
<dbReference type="Gene3D" id="1.20.5.2210">
    <property type="match status" value="1"/>
</dbReference>
<dbReference type="InterPro" id="IPR008688">
    <property type="entry name" value="ATP_synth_Bsub_B/MI25"/>
</dbReference>
<dbReference type="InterPro" id="IPR013837">
    <property type="entry name" value="ATP_synth_F0_suB"/>
</dbReference>
<dbReference type="PANTHER" id="PTHR12733:SF6">
    <property type="entry name" value="ATP SYNTHASE F(0) COMPLEX SUBUNIT B2, MITOCHONDRIAL"/>
    <property type="match status" value="1"/>
</dbReference>
<dbReference type="PANTHER" id="PTHR12733">
    <property type="entry name" value="MITOCHONDRIAL ATP SYNTHASE B CHAIN"/>
    <property type="match status" value="1"/>
</dbReference>
<dbReference type="Pfam" id="PF05405">
    <property type="entry name" value="Mt_ATP-synt_B"/>
    <property type="match status" value="1"/>
</dbReference>
<dbReference type="SUPFAM" id="SSF161060">
    <property type="entry name" value="ATP synthase B chain-like"/>
    <property type="match status" value="1"/>
</dbReference>
<name>AT5F2_CAEEL</name>
<accession>Q19126</accession>
<protein>
    <recommendedName>
        <fullName evidence="4">ATP synthase F(0) complex subunit B2, mitochondrial</fullName>
    </recommendedName>
    <alternativeName>
        <fullName evidence="4">ATP synthase peripheral stalk-membrane subunit B2</fullName>
    </alternativeName>
    <alternativeName>
        <fullName evidence="4">ATP synthase proton-transporting mitochondrial F(0) complex subunit B2</fullName>
    </alternativeName>
    <alternativeName>
        <fullName evidence="4">ATP synthase subunit B2</fullName>
        <shortName evidence="4">ATPase subunit B2</shortName>
    </alternativeName>
</protein>
<evidence type="ECO:0000255" key="1"/>
<evidence type="ECO:0000255" key="2">
    <source>
        <dbReference type="RuleBase" id="RU368017"/>
    </source>
</evidence>
<evidence type="ECO:0000269" key="3">
    <source>
    </source>
</evidence>
<evidence type="ECO:0000305" key="4"/>
<evidence type="ECO:0000312" key="5">
    <source>
        <dbReference type="Proteomes" id="UP000001940"/>
    </source>
</evidence>
<evidence type="ECO:0000312" key="6">
    <source>
        <dbReference type="WormBase" id="F02E8.1"/>
    </source>
</evidence>
<gene>
    <name evidence="6" type="primary">asb-2</name>
    <name evidence="6" type="ORF">F02E8.1</name>
</gene>
<feature type="transit peptide" description="Mitochondrion" evidence="1">
    <location>
        <begin position="1"/>
        <end position="22"/>
    </location>
</feature>
<feature type="chain" id="PRO_0000454589" description="ATP synthase F(0) complex subunit B2, mitochondrial">
    <location>
        <begin position="23"/>
        <end position="305"/>
    </location>
</feature>